<dbReference type="EC" id="1.4.4.2" evidence="1"/>
<dbReference type="EMBL" id="CP000888">
    <property type="protein sequence ID" value="ACD73982.1"/>
    <property type="molecule type" value="Genomic_DNA"/>
</dbReference>
<dbReference type="RefSeq" id="WP_002967268.1">
    <property type="nucleotide sequence ID" value="NC_010740.1"/>
</dbReference>
<dbReference type="SMR" id="B2SAU5"/>
<dbReference type="GeneID" id="93015578"/>
<dbReference type="KEGG" id="bmc:BAbS19_II04850"/>
<dbReference type="HOGENOM" id="CLU_004620_2_1_5"/>
<dbReference type="Proteomes" id="UP000002565">
    <property type="component" value="Chromosome 2"/>
</dbReference>
<dbReference type="GO" id="GO:0005829">
    <property type="term" value="C:cytosol"/>
    <property type="evidence" value="ECO:0007669"/>
    <property type="project" value="TreeGrafter"/>
</dbReference>
<dbReference type="GO" id="GO:0005960">
    <property type="term" value="C:glycine cleavage complex"/>
    <property type="evidence" value="ECO:0007669"/>
    <property type="project" value="TreeGrafter"/>
</dbReference>
<dbReference type="GO" id="GO:0016594">
    <property type="term" value="F:glycine binding"/>
    <property type="evidence" value="ECO:0007669"/>
    <property type="project" value="TreeGrafter"/>
</dbReference>
<dbReference type="GO" id="GO:0004375">
    <property type="term" value="F:glycine dehydrogenase (decarboxylating) activity"/>
    <property type="evidence" value="ECO:0007669"/>
    <property type="project" value="UniProtKB-EC"/>
</dbReference>
<dbReference type="GO" id="GO:0030170">
    <property type="term" value="F:pyridoxal phosphate binding"/>
    <property type="evidence" value="ECO:0007669"/>
    <property type="project" value="TreeGrafter"/>
</dbReference>
<dbReference type="GO" id="GO:0019464">
    <property type="term" value="P:glycine decarboxylation via glycine cleavage system"/>
    <property type="evidence" value="ECO:0007669"/>
    <property type="project" value="UniProtKB-UniRule"/>
</dbReference>
<dbReference type="CDD" id="cd00613">
    <property type="entry name" value="GDC-P"/>
    <property type="match status" value="2"/>
</dbReference>
<dbReference type="FunFam" id="3.90.1150.10:FF:000007">
    <property type="entry name" value="Glycine dehydrogenase (decarboxylating), mitochondrial"/>
    <property type="match status" value="1"/>
</dbReference>
<dbReference type="FunFam" id="3.40.640.10:FF:000007">
    <property type="entry name" value="glycine dehydrogenase (Decarboxylating), mitochondrial"/>
    <property type="match status" value="1"/>
</dbReference>
<dbReference type="Gene3D" id="3.90.1150.10">
    <property type="entry name" value="Aspartate Aminotransferase, domain 1"/>
    <property type="match status" value="2"/>
</dbReference>
<dbReference type="Gene3D" id="3.40.640.10">
    <property type="entry name" value="Type I PLP-dependent aspartate aminotransferase-like (Major domain)"/>
    <property type="match status" value="2"/>
</dbReference>
<dbReference type="HAMAP" id="MF_00711">
    <property type="entry name" value="GcvP"/>
    <property type="match status" value="1"/>
</dbReference>
<dbReference type="InterPro" id="IPR003437">
    <property type="entry name" value="GcvP"/>
</dbReference>
<dbReference type="InterPro" id="IPR049316">
    <property type="entry name" value="GDC-P_C"/>
</dbReference>
<dbReference type="InterPro" id="IPR049315">
    <property type="entry name" value="GDC-P_N"/>
</dbReference>
<dbReference type="InterPro" id="IPR020581">
    <property type="entry name" value="GDC_P"/>
</dbReference>
<dbReference type="InterPro" id="IPR015424">
    <property type="entry name" value="PyrdxlP-dep_Trfase"/>
</dbReference>
<dbReference type="InterPro" id="IPR015421">
    <property type="entry name" value="PyrdxlP-dep_Trfase_major"/>
</dbReference>
<dbReference type="InterPro" id="IPR015422">
    <property type="entry name" value="PyrdxlP-dep_Trfase_small"/>
</dbReference>
<dbReference type="NCBIfam" id="TIGR00461">
    <property type="entry name" value="gcvP"/>
    <property type="match status" value="1"/>
</dbReference>
<dbReference type="NCBIfam" id="NF003346">
    <property type="entry name" value="PRK04366.1"/>
    <property type="match status" value="1"/>
</dbReference>
<dbReference type="PANTHER" id="PTHR11773:SF1">
    <property type="entry name" value="GLYCINE DEHYDROGENASE (DECARBOXYLATING), MITOCHONDRIAL"/>
    <property type="match status" value="1"/>
</dbReference>
<dbReference type="PANTHER" id="PTHR11773">
    <property type="entry name" value="GLYCINE DEHYDROGENASE, DECARBOXYLATING"/>
    <property type="match status" value="1"/>
</dbReference>
<dbReference type="Pfam" id="PF21478">
    <property type="entry name" value="GcvP2_C"/>
    <property type="match status" value="1"/>
</dbReference>
<dbReference type="Pfam" id="PF02347">
    <property type="entry name" value="GDC-P"/>
    <property type="match status" value="2"/>
</dbReference>
<dbReference type="SUPFAM" id="SSF53383">
    <property type="entry name" value="PLP-dependent transferases"/>
    <property type="match status" value="2"/>
</dbReference>
<organism>
    <name type="scientific">Brucella abortus (strain S19)</name>
    <dbReference type="NCBI Taxonomy" id="430066"/>
    <lineage>
        <taxon>Bacteria</taxon>
        <taxon>Pseudomonadati</taxon>
        <taxon>Pseudomonadota</taxon>
        <taxon>Alphaproteobacteria</taxon>
        <taxon>Hyphomicrobiales</taxon>
        <taxon>Brucellaceae</taxon>
        <taxon>Brucella/Ochrobactrum group</taxon>
        <taxon>Brucella</taxon>
    </lineage>
</organism>
<accession>B2SAU5</accession>
<protein>
    <recommendedName>
        <fullName evidence="1">Glycine dehydrogenase (decarboxylating)</fullName>
        <ecNumber evidence="1">1.4.4.2</ecNumber>
    </recommendedName>
    <alternativeName>
        <fullName evidence="1">Glycine cleavage system P-protein</fullName>
    </alternativeName>
    <alternativeName>
        <fullName evidence="1">Glycine decarboxylase</fullName>
    </alternativeName>
    <alternativeName>
        <fullName evidence="1">Glycine dehydrogenase (aminomethyl-transferring)</fullName>
    </alternativeName>
</protein>
<gene>
    <name evidence="1" type="primary">gcvP</name>
    <name type="ordered locus">BAbS19_II04850</name>
</gene>
<name>GCSP_BRUA1</name>
<sequence length="932" mass="99264">MTEFLPFVARHIGPRHEDERAMLAALGLPSMETLITQAVPAPIRLNRALNLPAALSEADALAELGTIMGRNVVKKSFIGAGYHGVHTPPVIQRNLFENPAWYTAYTPYQSEISQGRLELLFHFQTLVAELTGLPVACASLLDEATAVAEAIGVACRHHRDKRSRILLAGELHPQTVDVVNTRAEPLGWEIATGSDVDDNTAAIVVPWPDTRGVYGDFAKVIADAKAKGALVIAVADPLALTIMEAPARWGADMAVGSMQRYGVPMGFGGPHAAYLAVSEALTRIIPGRIVGQSVDAHGRAAYRLALQTREQHIRRDKATSNICTAQALLANMAAAFAIWHGPAGLQAIATRVAALAARFAAALKAAGVEIAGESLFDTVTAKVPGKAAAIAAEADKGGRLIRIIDADTVGVTFDETSTEEDLTALASLFGAKPVGGDTVLVPGKERGEGFLTQEVFHSHRSETEMMRFLRRLADKDLALDRAMIPLGSCTMKLNAAAEMMPVSWNTVANLHPFAPAEQVQGYAKMTSDLEAWLCEITGFAGVSLQPNAGSQGEYAGLMAIRHYHQARGQGHRNICLIPSSAHGTNPASASMAGMSVVVVNCRPDGDIDIDDLKAKAEKHRDNLAAFMITYPSTYGVFEEGIKAFCEIVHDNGGQVYFDGANLNALVGLARPADIGADVCHMNLHKTFCIPHGGGGPGVGPIGVAKHLVPYLPGHVEAGSEHAVAAAQFGSASILVITWMYIRMMGGAGLKKATEAAILNANYIAHRLKGVYPILYTGAHDRVAHECIVDTRVLKDSAGITVEDVAKRLIDYGFHAPTMSWPVAGTLMIEPTESEPKLEIDRLCDAMIAIAGEAKKVADGVWPADDNPLANAPHTASDTLATEWKHPYTREEAVFPGGAFDPTAKYWPPVSRVDNVGGDRNLICSCPPVATYG</sequence>
<proteinExistence type="inferred from homology"/>
<comment type="function">
    <text evidence="1">The glycine cleavage system catalyzes the degradation of glycine. The P protein binds the alpha-amino group of glycine through its pyridoxal phosphate cofactor; CO(2) is released and the remaining methylamine moiety is then transferred to the lipoamide cofactor of the H protein.</text>
</comment>
<comment type="catalytic activity">
    <reaction evidence="1">
        <text>N(6)-[(R)-lipoyl]-L-lysyl-[glycine-cleavage complex H protein] + glycine + H(+) = N(6)-[(R)-S(8)-aminomethyldihydrolipoyl]-L-lysyl-[glycine-cleavage complex H protein] + CO2</text>
        <dbReference type="Rhea" id="RHEA:24304"/>
        <dbReference type="Rhea" id="RHEA-COMP:10494"/>
        <dbReference type="Rhea" id="RHEA-COMP:10495"/>
        <dbReference type="ChEBI" id="CHEBI:15378"/>
        <dbReference type="ChEBI" id="CHEBI:16526"/>
        <dbReference type="ChEBI" id="CHEBI:57305"/>
        <dbReference type="ChEBI" id="CHEBI:83099"/>
        <dbReference type="ChEBI" id="CHEBI:83143"/>
        <dbReference type="EC" id="1.4.4.2"/>
    </reaction>
</comment>
<comment type="cofactor">
    <cofactor evidence="1">
        <name>pyridoxal 5'-phosphate</name>
        <dbReference type="ChEBI" id="CHEBI:597326"/>
    </cofactor>
</comment>
<comment type="subunit">
    <text evidence="1">The glycine cleavage system is composed of four proteins: P, T, L and H.</text>
</comment>
<comment type="similarity">
    <text evidence="1">Belongs to the GcvP family.</text>
</comment>
<feature type="chain" id="PRO_1000190206" description="Glycine dehydrogenase (decarboxylating)">
    <location>
        <begin position="1"/>
        <end position="932"/>
    </location>
</feature>
<feature type="modified residue" description="N6-(pyridoxal phosphate)lysine" evidence="1">
    <location>
        <position position="685"/>
    </location>
</feature>
<reference key="1">
    <citation type="journal article" date="2008" name="PLoS ONE">
        <title>Genome sequence of Brucella abortus vaccine strain S19 compared to virulent strains yields candidate virulence genes.</title>
        <authorList>
            <person name="Crasta O.R."/>
            <person name="Folkerts O."/>
            <person name="Fei Z."/>
            <person name="Mane S.P."/>
            <person name="Evans C."/>
            <person name="Martino-Catt S."/>
            <person name="Bricker B."/>
            <person name="Yu G."/>
            <person name="Du L."/>
            <person name="Sobral B.W."/>
        </authorList>
    </citation>
    <scope>NUCLEOTIDE SEQUENCE [LARGE SCALE GENOMIC DNA]</scope>
    <source>
        <strain>S19</strain>
    </source>
</reference>
<keyword id="KW-0560">Oxidoreductase</keyword>
<keyword id="KW-0663">Pyridoxal phosphate</keyword>
<evidence type="ECO:0000255" key="1">
    <source>
        <dbReference type="HAMAP-Rule" id="MF_00711"/>
    </source>
</evidence>